<reference key="1">
    <citation type="submission" date="2007-06" db="EMBL/GenBank/DDBJ databases">
        <title>Complete sequence of chromosome of Staphylococcus aureus subsp. aureus JH1.</title>
        <authorList>
            <consortium name="US DOE Joint Genome Institute"/>
            <person name="Copeland A."/>
            <person name="Lucas S."/>
            <person name="Lapidus A."/>
            <person name="Barry K."/>
            <person name="Detter J.C."/>
            <person name="Glavina del Rio T."/>
            <person name="Hammon N."/>
            <person name="Israni S."/>
            <person name="Dalin E."/>
            <person name="Tice H."/>
            <person name="Pitluck S."/>
            <person name="Chain P."/>
            <person name="Malfatti S."/>
            <person name="Shin M."/>
            <person name="Vergez L."/>
            <person name="Schmutz J."/>
            <person name="Larimer F."/>
            <person name="Land M."/>
            <person name="Hauser L."/>
            <person name="Kyrpides N."/>
            <person name="Ivanova N."/>
            <person name="Tomasz A."/>
            <person name="Richardson P."/>
        </authorList>
    </citation>
    <scope>NUCLEOTIDE SEQUENCE [LARGE SCALE GENOMIC DNA]</scope>
    <source>
        <strain>JH1</strain>
    </source>
</reference>
<name>ARLY_STAA2</name>
<comment type="catalytic activity">
    <reaction evidence="1">
        <text>2-(N(omega)-L-arginino)succinate = fumarate + L-arginine</text>
        <dbReference type="Rhea" id="RHEA:24020"/>
        <dbReference type="ChEBI" id="CHEBI:29806"/>
        <dbReference type="ChEBI" id="CHEBI:32682"/>
        <dbReference type="ChEBI" id="CHEBI:57472"/>
        <dbReference type="EC" id="4.3.2.1"/>
    </reaction>
</comment>
<comment type="pathway">
    <text evidence="1">Amino-acid biosynthesis; L-arginine biosynthesis; L-arginine from L-ornithine and carbamoyl phosphate: step 3/3.</text>
</comment>
<comment type="subcellular location">
    <subcellularLocation>
        <location evidence="1">Cytoplasm</location>
    </subcellularLocation>
</comment>
<comment type="similarity">
    <text evidence="1">Belongs to the lyase 1 family. Argininosuccinate lyase subfamily.</text>
</comment>
<keyword id="KW-0028">Amino-acid biosynthesis</keyword>
<keyword id="KW-0055">Arginine biosynthesis</keyword>
<keyword id="KW-0963">Cytoplasm</keyword>
<keyword id="KW-0456">Lyase</keyword>
<evidence type="ECO:0000255" key="1">
    <source>
        <dbReference type="HAMAP-Rule" id="MF_00006"/>
    </source>
</evidence>
<accession>A6U067</accession>
<gene>
    <name evidence="1" type="primary">argH</name>
    <name type="ordered locus">SaurJH1_0979</name>
</gene>
<proteinExistence type="inferred from homology"/>
<sequence>MSNKAWGGRFEVQPEEWVDDFNASITFDQTLIDQDIEGSIAHATMLANQGIISQQDSEQIIQGLKSIQHDYHQDQIQFSASLEDIHLNIEHELIKRIGDAGGKLHTGRSRNDQVATDMHLYTKKQVQDIIALIKSLQSVIVDIASNNVDTIMPGYTHLQRAQPISFAHHIMTYFWMLQRDQQRFEDSLKRIDINPLGAAALSGTTYPIDRHETTALLNFGSLYENSLDAVSDRDYIIETLHNISLTMVHLSRFAEEIIFWSTDEAKFITLSDAFSTGSSIMPQKKNPDMAELIRGKVGRTTGHLMSMLMTLKGLPLAYNKDMQEDKEGLFDAVHTIKGSLRIFEGMIQTMTINKERLNQTVKEDFSNATELADYLVTKNIPFRTAHEIVGKIVLECIQQGHYLLDVPLATYQQHHSSIDADIYDYLQPENCLKRRQSYGSTGQSSVKQQLDVAKQLLSQ</sequence>
<dbReference type="EC" id="4.3.2.1" evidence="1"/>
<dbReference type="EMBL" id="CP000736">
    <property type="protein sequence ID" value="ABR51835.1"/>
    <property type="molecule type" value="Genomic_DNA"/>
</dbReference>
<dbReference type="SMR" id="A6U067"/>
<dbReference type="KEGG" id="sah:SaurJH1_0979"/>
<dbReference type="HOGENOM" id="CLU_027272_2_3_9"/>
<dbReference type="UniPathway" id="UPA00068">
    <property type="reaction ID" value="UER00114"/>
</dbReference>
<dbReference type="GO" id="GO:0005829">
    <property type="term" value="C:cytosol"/>
    <property type="evidence" value="ECO:0007669"/>
    <property type="project" value="TreeGrafter"/>
</dbReference>
<dbReference type="GO" id="GO:0004056">
    <property type="term" value="F:argininosuccinate lyase activity"/>
    <property type="evidence" value="ECO:0007669"/>
    <property type="project" value="UniProtKB-UniRule"/>
</dbReference>
<dbReference type="GO" id="GO:0042450">
    <property type="term" value="P:arginine biosynthetic process via ornithine"/>
    <property type="evidence" value="ECO:0007669"/>
    <property type="project" value="InterPro"/>
</dbReference>
<dbReference type="GO" id="GO:0006526">
    <property type="term" value="P:L-arginine biosynthetic process"/>
    <property type="evidence" value="ECO:0007669"/>
    <property type="project" value="UniProtKB-UniRule"/>
</dbReference>
<dbReference type="CDD" id="cd01359">
    <property type="entry name" value="Argininosuccinate_lyase"/>
    <property type="match status" value="1"/>
</dbReference>
<dbReference type="FunFam" id="1.10.275.10:FF:000002">
    <property type="entry name" value="Argininosuccinate lyase"/>
    <property type="match status" value="1"/>
</dbReference>
<dbReference type="FunFam" id="1.10.40.30:FF:000001">
    <property type="entry name" value="Argininosuccinate lyase"/>
    <property type="match status" value="1"/>
</dbReference>
<dbReference type="FunFam" id="1.20.200.10:FF:000006">
    <property type="entry name" value="Argininosuccinate lyase"/>
    <property type="match status" value="1"/>
</dbReference>
<dbReference type="Gene3D" id="1.10.40.30">
    <property type="entry name" value="Fumarase/aspartase (C-terminal domain)"/>
    <property type="match status" value="1"/>
</dbReference>
<dbReference type="Gene3D" id="1.20.200.10">
    <property type="entry name" value="Fumarase/aspartase (Central domain)"/>
    <property type="match status" value="1"/>
</dbReference>
<dbReference type="Gene3D" id="1.10.275.10">
    <property type="entry name" value="Fumarase/aspartase (N-terminal domain)"/>
    <property type="match status" value="1"/>
</dbReference>
<dbReference type="HAMAP" id="MF_00006">
    <property type="entry name" value="Arg_succ_lyase"/>
    <property type="match status" value="1"/>
</dbReference>
<dbReference type="InterPro" id="IPR029419">
    <property type="entry name" value="Arg_succ_lyase_C"/>
</dbReference>
<dbReference type="InterPro" id="IPR009049">
    <property type="entry name" value="Argininosuccinate_lyase"/>
</dbReference>
<dbReference type="InterPro" id="IPR024083">
    <property type="entry name" value="Fumarase/histidase_N"/>
</dbReference>
<dbReference type="InterPro" id="IPR020557">
    <property type="entry name" value="Fumarate_lyase_CS"/>
</dbReference>
<dbReference type="InterPro" id="IPR000362">
    <property type="entry name" value="Fumarate_lyase_fam"/>
</dbReference>
<dbReference type="InterPro" id="IPR022761">
    <property type="entry name" value="Fumarate_lyase_N"/>
</dbReference>
<dbReference type="InterPro" id="IPR008948">
    <property type="entry name" value="L-Aspartase-like"/>
</dbReference>
<dbReference type="NCBIfam" id="TIGR00838">
    <property type="entry name" value="argH"/>
    <property type="match status" value="1"/>
</dbReference>
<dbReference type="PANTHER" id="PTHR43814">
    <property type="entry name" value="ARGININOSUCCINATE LYASE"/>
    <property type="match status" value="1"/>
</dbReference>
<dbReference type="PANTHER" id="PTHR43814:SF1">
    <property type="entry name" value="ARGININOSUCCINATE LYASE"/>
    <property type="match status" value="1"/>
</dbReference>
<dbReference type="Pfam" id="PF14698">
    <property type="entry name" value="ASL_C2"/>
    <property type="match status" value="1"/>
</dbReference>
<dbReference type="Pfam" id="PF00206">
    <property type="entry name" value="Lyase_1"/>
    <property type="match status" value="1"/>
</dbReference>
<dbReference type="PRINTS" id="PR00145">
    <property type="entry name" value="ARGSUCLYASE"/>
</dbReference>
<dbReference type="PRINTS" id="PR00149">
    <property type="entry name" value="FUMRATELYASE"/>
</dbReference>
<dbReference type="SUPFAM" id="SSF48557">
    <property type="entry name" value="L-aspartase-like"/>
    <property type="match status" value="1"/>
</dbReference>
<dbReference type="PROSITE" id="PS00163">
    <property type="entry name" value="FUMARATE_LYASES"/>
    <property type="match status" value="1"/>
</dbReference>
<feature type="chain" id="PRO_1000073861" description="Argininosuccinate lyase">
    <location>
        <begin position="1"/>
        <end position="459"/>
    </location>
</feature>
<organism>
    <name type="scientific">Staphylococcus aureus (strain JH1)</name>
    <dbReference type="NCBI Taxonomy" id="359787"/>
    <lineage>
        <taxon>Bacteria</taxon>
        <taxon>Bacillati</taxon>
        <taxon>Bacillota</taxon>
        <taxon>Bacilli</taxon>
        <taxon>Bacillales</taxon>
        <taxon>Staphylococcaceae</taxon>
        <taxon>Staphylococcus</taxon>
    </lineage>
</organism>
<protein>
    <recommendedName>
        <fullName evidence="1">Argininosuccinate lyase</fullName>
        <shortName evidence="1">ASAL</shortName>
        <ecNumber evidence="1">4.3.2.1</ecNumber>
    </recommendedName>
    <alternativeName>
        <fullName evidence="1">Arginosuccinase</fullName>
    </alternativeName>
</protein>